<proteinExistence type="inferred from homology"/>
<feature type="chain" id="PRO_0000138810" description="3-dehydroquinate dehydratase">
    <location>
        <begin position="1"/>
        <end position="238"/>
    </location>
</feature>
<feature type="active site" description="Proton donor/acceptor" evidence="1">
    <location>
        <position position="133"/>
    </location>
</feature>
<feature type="active site" description="Schiff-base intermediate with substrate" evidence="1">
    <location>
        <position position="160"/>
    </location>
</feature>
<feature type="binding site" evidence="1">
    <location>
        <begin position="35"/>
        <end position="37"/>
    </location>
    <ligand>
        <name>3-dehydroquinate</name>
        <dbReference type="ChEBI" id="CHEBI:32364"/>
    </ligand>
</feature>
<feature type="binding site" evidence="1">
    <location>
        <position position="70"/>
    </location>
    <ligand>
        <name>3-dehydroquinate</name>
        <dbReference type="ChEBI" id="CHEBI:32364"/>
    </ligand>
</feature>
<feature type="binding site" evidence="1">
    <location>
        <position position="202"/>
    </location>
    <ligand>
        <name>3-dehydroquinate</name>
        <dbReference type="ChEBI" id="CHEBI:32364"/>
    </ligand>
</feature>
<feature type="binding site" evidence="1">
    <location>
        <position position="225"/>
    </location>
    <ligand>
        <name>3-dehydroquinate</name>
        <dbReference type="ChEBI" id="CHEBI:32364"/>
    </ligand>
</feature>
<evidence type="ECO:0000255" key="1">
    <source>
        <dbReference type="HAMAP-Rule" id="MF_00214"/>
    </source>
</evidence>
<organism>
    <name type="scientific">Staphylococcus aureus (strain N315)</name>
    <dbReference type="NCBI Taxonomy" id="158879"/>
    <lineage>
        <taxon>Bacteria</taxon>
        <taxon>Bacillati</taxon>
        <taxon>Bacillota</taxon>
        <taxon>Bacilli</taxon>
        <taxon>Bacillales</taxon>
        <taxon>Staphylococcaceae</taxon>
        <taxon>Staphylococcus</taxon>
    </lineage>
</organism>
<reference key="1">
    <citation type="journal article" date="2001" name="Lancet">
        <title>Whole genome sequencing of meticillin-resistant Staphylococcus aureus.</title>
        <authorList>
            <person name="Kuroda M."/>
            <person name="Ohta T."/>
            <person name="Uchiyama I."/>
            <person name="Baba T."/>
            <person name="Yuzawa H."/>
            <person name="Kobayashi I."/>
            <person name="Cui L."/>
            <person name="Oguchi A."/>
            <person name="Aoki K."/>
            <person name="Nagai Y."/>
            <person name="Lian J.-Q."/>
            <person name="Ito T."/>
            <person name="Kanamori M."/>
            <person name="Matsumaru H."/>
            <person name="Maruyama A."/>
            <person name="Murakami H."/>
            <person name="Hosoyama A."/>
            <person name="Mizutani-Ui Y."/>
            <person name="Takahashi N.K."/>
            <person name="Sawano T."/>
            <person name="Inoue R."/>
            <person name="Kaito C."/>
            <person name="Sekimizu K."/>
            <person name="Hirakawa H."/>
            <person name="Kuhara S."/>
            <person name="Goto S."/>
            <person name="Yabuzaki J."/>
            <person name="Kanehisa M."/>
            <person name="Yamashita A."/>
            <person name="Oshima K."/>
            <person name="Furuya K."/>
            <person name="Yoshino C."/>
            <person name="Shiba T."/>
            <person name="Hattori M."/>
            <person name="Ogasawara N."/>
            <person name="Hayashi H."/>
            <person name="Hiramatsu K."/>
        </authorList>
    </citation>
    <scope>NUCLEOTIDE SEQUENCE [LARGE SCALE GENOMIC DNA]</scope>
    <source>
        <strain>N315</strain>
    </source>
</reference>
<keyword id="KW-0028">Amino-acid biosynthesis</keyword>
<keyword id="KW-0057">Aromatic amino acid biosynthesis</keyword>
<keyword id="KW-0456">Lyase</keyword>
<keyword id="KW-0704">Schiff base</keyword>
<sequence>MTHVEVVATIAPQLSIEETLIQKINHRIDAIDVLELRIDQIENVTVDQVAEMITKLKVMQDSFKLLVTYRTKLQGGYGQFINDLYLNLISDLANINGIDMIDIEWQADIDIEKHQRIIKHLQQYNKEVVISHHNFESTPPLDELQFIFFKMQKFNPEYVKLAVMPHNKNDVLNLLQAMSTFSDTMDCKVVGISMSKLGLISRTAQGVFGGALTYGCIGEPQAPGQIDVTDLKAQVTLY</sequence>
<comment type="function">
    <text evidence="1">Involved in the third step of the chorismate pathway, which leads to the biosynthesis of aromatic amino acids. Catalyzes the cis-dehydration of 3-dehydroquinate (DHQ) and introduces the first double bond of the aromatic ring to yield 3-dehydroshikimate.</text>
</comment>
<comment type="catalytic activity">
    <reaction evidence="1">
        <text>3-dehydroquinate = 3-dehydroshikimate + H2O</text>
        <dbReference type="Rhea" id="RHEA:21096"/>
        <dbReference type="ChEBI" id="CHEBI:15377"/>
        <dbReference type="ChEBI" id="CHEBI:16630"/>
        <dbReference type="ChEBI" id="CHEBI:32364"/>
        <dbReference type="EC" id="4.2.1.10"/>
    </reaction>
</comment>
<comment type="pathway">
    <text evidence="1">Metabolic intermediate biosynthesis; chorismate biosynthesis; chorismate from D-erythrose 4-phosphate and phosphoenolpyruvate: step 3/7.</text>
</comment>
<comment type="subunit">
    <text evidence="1">Homodimer.</text>
</comment>
<comment type="similarity">
    <text evidence="1">Belongs to the type-I 3-dehydroquinase family.</text>
</comment>
<protein>
    <recommendedName>
        <fullName evidence="1">3-dehydroquinate dehydratase</fullName>
        <shortName evidence="1">3-dehydroquinase</shortName>
        <ecNumber evidence="1">4.2.1.10</ecNumber>
    </recommendedName>
    <alternativeName>
        <fullName evidence="1">Type I DHQase</fullName>
    </alternativeName>
    <alternativeName>
        <fullName evidence="1">Type I dehydroquinase</fullName>
        <shortName evidence="1">DHQ1</shortName>
    </alternativeName>
</protein>
<gene>
    <name evidence="1" type="primary">aroD</name>
    <name type="ordered locus">SA0756</name>
</gene>
<name>AROD_STAAN</name>
<accession>P63587</accession>
<accession>Q99VH7</accession>
<dbReference type="EC" id="4.2.1.10" evidence="1"/>
<dbReference type="EMBL" id="BA000018">
    <property type="protein sequence ID" value="BAB41993.1"/>
    <property type="molecule type" value="Genomic_DNA"/>
</dbReference>
<dbReference type="PIR" id="F89854">
    <property type="entry name" value="F89854"/>
</dbReference>
<dbReference type="RefSeq" id="WP_000150011.1">
    <property type="nucleotide sequence ID" value="NC_002745.2"/>
</dbReference>
<dbReference type="SMR" id="P63587"/>
<dbReference type="EnsemblBacteria" id="BAB41993">
    <property type="protein sequence ID" value="BAB41993"/>
    <property type="gene ID" value="BAB41993"/>
</dbReference>
<dbReference type="KEGG" id="sau:SA0756"/>
<dbReference type="HOGENOM" id="CLU_064444_2_1_9"/>
<dbReference type="UniPathway" id="UPA00053">
    <property type="reaction ID" value="UER00086"/>
</dbReference>
<dbReference type="GO" id="GO:0003855">
    <property type="term" value="F:3-dehydroquinate dehydratase activity"/>
    <property type="evidence" value="ECO:0007669"/>
    <property type="project" value="UniProtKB-UniRule"/>
</dbReference>
<dbReference type="GO" id="GO:0046279">
    <property type="term" value="P:3,4-dihydroxybenzoate biosynthetic process"/>
    <property type="evidence" value="ECO:0007669"/>
    <property type="project" value="TreeGrafter"/>
</dbReference>
<dbReference type="GO" id="GO:0008652">
    <property type="term" value="P:amino acid biosynthetic process"/>
    <property type="evidence" value="ECO:0007669"/>
    <property type="project" value="UniProtKB-KW"/>
</dbReference>
<dbReference type="GO" id="GO:0009073">
    <property type="term" value="P:aromatic amino acid family biosynthetic process"/>
    <property type="evidence" value="ECO:0007669"/>
    <property type="project" value="UniProtKB-KW"/>
</dbReference>
<dbReference type="GO" id="GO:0009423">
    <property type="term" value="P:chorismate biosynthetic process"/>
    <property type="evidence" value="ECO:0007669"/>
    <property type="project" value="UniProtKB-UniRule"/>
</dbReference>
<dbReference type="CDD" id="cd00502">
    <property type="entry name" value="DHQase_I"/>
    <property type="match status" value="1"/>
</dbReference>
<dbReference type="FunFam" id="3.20.20.70:FF:000216">
    <property type="entry name" value="3-dehydroquinate dehydratase"/>
    <property type="match status" value="1"/>
</dbReference>
<dbReference type="Gene3D" id="3.20.20.70">
    <property type="entry name" value="Aldolase class I"/>
    <property type="match status" value="1"/>
</dbReference>
<dbReference type="HAMAP" id="MF_00214">
    <property type="entry name" value="AroD"/>
    <property type="match status" value="1"/>
</dbReference>
<dbReference type="InterPro" id="IPR013785">
    <property type="entry name" value="Aldolase_TIM"/>
</dbReference>
<dbReference type="InterPro" id="IPR001381">
    <property type="entry name" value="DHquinase_I"/>
</dbReference>
<dbReference type="InterPro" id="IPR050146">
    <property type="entry name" value="Type-I_3-dehydroquinase"/>
</dbReference>
<dbReference type="NCBIfam" id="TIGR01093">
    <property type="entry name" value="aroD"/>
    <property type="match status" value="1"/>
</dbReference>
<dbReference type="PANTHER" id="PTHR43699">
    <property type="entry name" value="3-DEHYDROQUINATE DEHYDRATASE"/>
    <property type="match status" value="1"/>
</dbReference>
<dbReference type="PANTHER" id="PTHR43699:SF1">
    <property type="entry name" value="3-DEHYDROQUINATE DEHYDRATASE"/>
    <property type="match status" value="1"/>
</dbReference>
<dbReference type="Pfam" id="PF01487">
    <property type="entry name" value="DHquinase_I"/>
    <property type="match status" value="1"/>
</dbReference>
<dbReference type="SUPFAM" id="SSF51569">
    <property type="entry name" value="Aldolase"/>
    <property type="match status" value="1"/>
</dbReference>